<protein>
    <recommendedName>
        <fullName>ADP,ATP carrier protein 5</fullName>
    </recommendedName>
    <alternativeName>
        <fullName>ADP/ATP translocase 5</fullName>
    </alternativeName>
</protein>
<gene>
    <name type="primary">tlcE</name>
    <name type="synonym">tlc5</name>
    <name type="ordered locus">RBE_0141</name>
</gene>
<evidence type="ECO:0000250" key="1"/>
<evidence type="ECO:0000255" key="2"/>
<evidence type="ECO:0000305" key="3"/>
<keyword id="KW-0067">ATP-binding</keyword>
<keyword id="KW-1003">Cell membrane</keyword>
<keyword id="KW-0472">Membrane</keyword>
<keyword id="KW-0547">Nucleotide-binding</keyword>
<keyword id="KW-0812">Transmembrane</keyword>
<keyword id="KW-1133">Transmembrane helix</keyword>
<keyword id="KW-0813">Transport</keyword>
<comment type="function">
    <text evidence="1">Provides the rickettsial cell with host ATP in exchange for rickettsial ADP. This is an obligate exchange system. This energy acquiring activity is an important component of rickettsial parasitism (By similarity).</text>
</comment>
<comment type="subcellular location">
    <subcellularLocation>
        <location>Cell membrane</location>
        <topology>Multi-pass membrane protein</topology>
    </subcellularLocation>
</comment>
<comment type="similarity">
    <text evidence="3">Belongs to the ADP/ATP translocase tlc family.</text>
</comment>
<reference key="1">
    <citation type="journal article" date="2006" name="PLoS Genet.">
        <title>Genome sequence of Rickettsia bellii illuminates the role of amoebae in gene exchanges between intracellular pathogens.</title>
        <authorList>
            <person name="Ogata H."/>
            <person name="La Scola B."/>
            <person name="Audic S."/>
            <person name="Renesto P."/>
            <person name="Blanc G."/>
            <person name="Robert C."/>
            <person name="Fournier P.-E."/>
            <person name="Claverie J.-M."/>
            <person name="Raoult D."/>
        </authorList>
    </citation>
    <scope>NUCLEOTIDE SEQUENCE [LARGE SCALE GENOMIC DNA]</scope>
    <source>
        <strain>RML369-C</strain>
    </source>
</reference>
<accession>Q1RK92</accession>
<organism>
    <name type="scientific">Rickettsia bellii (strain RML369-C)</name>
    <dbReference type="NCBI Taxonomy" id="336407"/>
    <lineage>
        <taxon>Bacteria</taxon>
        <taxon>Pseudomonadati</taxon>
        <taxon>Pseudomonadota</taxon>
        <taxon>Alphaproteobacteria</taxon>
        <taxon>Rickettsiales</taxon>
        <taxon>Rickettsiaceae</taxon>
        <taxon>Rickettsieae</taxon>
        <taxon>Rickettsia</taxon>
        <taxon>belli group</taxon>
    </lineage>
</organism>
<name>TLCE_RICBR</name>
<dbReference type="EMBL" id="CP000087">
    <property type="protein sequence ID" value="ABE04222.1"/>
    <property type="molecule type" value="Genomic_DNA"/>
</dbReference>
<dbReference type="RefSeq" id="WP_011476837.1">
    <property type="nucleotide sequence ID" value="NC_007940.1"/>
</dbReference>
<dbReference type="KEGG" id="rbe:RBE_0141"/>
<dbReference type="eggNOG" id="COG3202">
    <property type="taxonomic scope" value="Bacteria"/>
</dbReference>
<dbReference type="HOGENOM" id="CLU_023964_0_1_5"/>
<dbReference type="OrthoDB" id="19786at2"/>
<dbReference type="Proteomes" id="UP000001951">
    <property type="component" value="Chromosome"/>
</dbReference>
<dbReference type="GO" id="GO:0005886">
    <property type="term" value="C:plasma membrane"/>
    <property type="evidence" value="ECO:0007669"/>
    <property type="project" value="UniProtKB-SubCell"/>
</dbReference>
<dbReference type="GO" id="GO:0005524">
    <property type="term" value="F:ATP binding"/>
    <property type="evidence" value="ECO:0007669"/>
    <property type="project" value="UniProtKB-KW"/>
</dbReference>
<dbReference type="GO" id="GO:0005471">
    <property type="term" value="F:ATP:ADP antiporter activity"/>
    <property type="evidence" value="ECO:0007669"/>
    <property type="project" value="InterPro"/>
</dbReference>
<dbReference type="InterPro" id="IPR004667">
    <property type="entry name" value="ADP_ATP_car_bac_type"/>
</dbReference>
<dbReference type="NCBIfam" id="TIGR00769">
    <property type="entry name" value="AAA"/>
    <property type="match status" value="1"/>
</dbReference>
<dbReference type="PANTHER" id="PTHR31187">
    <property type="match status" value="1"/>
</dbReference>
<dbReference type="PANTHER" id="PTHR31187:SF1">
    <property type="entry name" value="ADP,ATP CARRIER PROTEIN 1"/>
    <property type="match status" value="1"/>
</dbReference>
<dbReference type="Pfam" id="PF03219">
    <property type="entry name" value="TLC"/>
    <property type="match status" value="1"/>
</dbReference>
<sequence length="500" mass="57123">MLSTSSSRPFKSKFRAAFWPIYNYELGKFIPMSALMFCILFNQNILRILKDSILISEISAEIAGFAKVYCVTPAAALFVIIYAKMINHLTFEKIFYYLTAFFIGFFVLFAFVIYPNIHIFHVHPDYLADWMERYPHFKWYISLIGNWGYIVYYSLAELWPNIFYVLLFWQFANELTTTEEAKRFYTLFSLFGNSSLILVGFLMMNLSSKETIVKHFINISDSKITLVQISTILVTIVAVICCLLIRFISRNVFTNPLFYAKAKSGRSTSERMGIIKSFKYIVKSKYLWLLLICSAAFGFAINLVEAVWKAKIKELYPTVNTYAEFNSLYILWTGVAIMVMTIIGNNVMRMHNWFVAAVISPVIIMVTGVLFFVLIVFDQKILSLFDGAILMSPLALAVSIGGIQNILAKGTKYSIWDTSREMLYIPLDQELKTKGKAAVDVISAKVGKSSSGLVQSIIFTIIPTATFTSISPVLMVVFTFVCLAWIYAVRKIYFEYQKIA</sequence>
<feature type="chain" id="PRO_0000286485" description="ADP,ATP carrier protein 5">
    <location>
        <begin position="1"/>
        <end position="500"/>
    </location>
</feature>
<feature type="transmembrane region" description="Helical" evidence="2">
    <location>
        <begin position="21"/>
        <end position="41"/>
    </location>
</feature>
<feature type="transmembrane region" description="Helical" evidence="2">
    <location>
        <begin position="62"/>
        <end position="82"/>
    </location>
</feature>
<feature type="transmembrane region" description="Helical" evidence="2">
    <location>
        <begin position="94"/>
        <end position="114"/>
    </location>
</feature>
<feature type="transmembrane region" description="Helical" evidence="2">
    <location>
        <begin position="149"/>
        <end position="169"/>
    </location>
</feature>
<feature type="transmembrane region" description="Helical" evidence="2">
    <location>
        <begin position="184"/>
        <end position="204"/>
    </location>
</feature>
<feature type="transmembrane region" description="Helical" evidence="2">
    <location>
        <begin position="224"/>
        <end position="244"/>
    </location>
</feature>
<feature type="transmembrane region" description="Helical" evidence="2">
    <location>
        <begin position="287"/>
        <end position="307"/>
    </location>
</feature>
<feature type="transmembrane region" description="Helical" evidence="2">
    <location>
        <begin position="328"/>
        <end position="348"/>
    </location>
</feature>
<feature type="transmembrane region" description="Helical" evidence="2">
    <location>
        <begin position="357"/>
        <end position="377"/>
    </location>
</feature>
<feature type="transmembrane region" description="Helical" evidence="2">
    <location>
        <begin position="381"/>
        <end position="401"/>
    </location>
</feature>
<feature type="transmembrane region" description="Helical" evidence="2">
    <location>
        <begin position="469"/>
        <end position="489"/>
    </location>
</feature>
<proteinExistence type="inferred from homology"/>